<dbReference type="EC" id="1.1.1.79" evidence="1"/>
<dbReference type="EC" id="1.1.1.81" evidence="1"/>
<dbReference type="EMBL" id="CP000946">
    <property type="protein sequence ID" value="ACA75845.1"/>
    <property type="molecule type" value="Genomic_DNA"/>
</dbReference>
<dbReference type="RefSeq" id="WP_000805029.1">
    <property type="nucleotide sequence ID" value="NZ_MTFT01000007.1"/>
</dbReference>
<dbReference type="SMR" id="B1IZP1"/>
<dbReference type="KEGG" id="ecl:EcolC_0163"/>
<dbReference type="HOGENOM" id="CLU_019796_1_2_6"/>
<dbReference type="GO" id="GO:0005829">
    <property type="term" value="C:cytosol"/>
    <property type="evidence" value="ECO:0007669"/>
    <property type="project" value="UniProtKB-ARBA"/>
</dbReference>
<dbReference type="GO" id="GO:0005886">
    <property type="term" value="C:plasma membrane"/>
    <property type="evidence" value="ECO:0007669"/>
    <property type="project" value="UniProtKB-UniRule"/>
</dbReference>
<dbReference type="GO" id="GO:0030267">
    <property type="term" value="F:glyoxylate reductase (NADPH) activity"/>
    <property type="evidence" value="ECO:0007669"/>
    <property type="project" value="UniProtKB-UniRule"/>
</dbReference>
<dbReference type="GO" id="GO:0008465">
    <property type="term" value="F:hydroxypyruvate reductase (NADH) activity"/>
    <property type="evidence" value="ECO:0007669"/>
    <property type="project" value="RHEA"/>
</dbReference>
<dbReference type="GO" id="GO:0120509">
    <property type="term" value="F:hydroxypyruvate reductase (NADPH) activity"/>
    <property type="evidence" value="ECO:0007669"/>
    <property type="project" value="RHEA"/>
</dbReference>
<dbReference type="GO" id="GO:0051287">
    <property type="term" value="F:NAD binding"/>
    <property type="evidence" value="ECO:0007669"/>
    <property type="project" value="InterPro"/>
</dbReference>
<dbReference type="CDD" id="cd05301">
    <property type="entry name" value="GDH"/>
    <property type="match status" value="1"/>
</dbReference>
<dbReference type="FunFam" id="3.40.50.720:FF:000026">
    <property type="entry name" value="Glyoxylate/hydroxypyruvate reductase B"/>
    <property type="match status" value="1"/>
</dbReference>
<dbReference type="Gene3D" id="3.40.50.720">
    <property type="entry name" value="NAD(P)-binding Rossmann-like Domain"/>
    <property type="match status" value="2"/>
</dbReference>
<dbReference type="HAMAP" id="MF_01667">
    <property type="entry name" value="2_Hacid_dh_C_GhrB"/>
    <property type="match status" value="1"/>
</dbReference>
<dbReference type="InterPro" id="IPR050223">
    <property type="entry name" value="D-isomer_2-hydroxyacid_DH"/>
</dbReference>
<dbReference type="InterPro" id="IPR006139">
    <property type="entry name" value="D-isomer_2_OHA_DH_cat_dom"/>
</dbReference>
<dbReference type="InterPro" id="IPR029753">
    <property type="entry name" value="D-isomer_DH_CS"/>
</dbReference>
<dbReference type="InterPro" id="IPR006140">
    <property type="entry name" value="D-isomer_DH_NAD-bd"/>
</dbReference>
<dbReference type="InterPro" id="IPR023756">
    <property type="entry name" value="Glyo/OHPyrv_Rdtase_B"/>
</dbReference>
<dbReference type="InterPro" id="IPR036291">
    <property type="entry name" value="NAD(P)-bd_dom_sf"/>
</dbReference>
<dbReference type="NCBIfam" id="NF011938">
    <property type="entry name" value="PRK15409.1"/>
    <property type="match status" value="1"/>
</dbReference>
<dbReference type="PANTHER" id="PTHR10996">
    <property type="entry name" value="2-HYDROXYACID DEHYDROGENASE-RELATED"/>
    <property type="match status" value="1"/>
</dbReference>
<dbReference type="PANTHER" id="PTHR10996:SF283">
    <property type="entry name" value="GLYOXYLATE_HYDROXYPYRUVATE REDUCTASE B"/>
    <property type="match status" value="1"/>
</dbReference>
<dbReference type="Pfam" id="PF00389">
    <property type="entry name" value="2-Hacid_dh"/>
    <property type="match status" value="1"/>
</dbReference>
<dbReference type="Pfam" id="PF02826">
    <property type="entry name" value="2-Hacid_dh_C"/>
    <property type="match status" value="1"/>
</dbReference>
<dbReference type="SUPFAM" id="SSF52283">
    <property type="entry name" value="Formate/glycerate dehydrogenase catalytic domain-like"/>
    <property type="match status" value="1"/>
</dbReference>
<dbReference type="SUPFAM" id="SSF51735">
    <property type="entry name" value="NAD(P)-binding Rossmann-fold domains"/>
    <property type="match status" value="1"/>
</dbReference>
<dbReference type="PROSITE" id="PS00670">
    <property type="entry name" value="D_2_HYDROXYACID_DH_2"/>
    <property type="match status" value="1"/>
</dbReference>
<dbReference type="PROSITE" id="PS00671">
    <property type="entry name" value="D_2_HYDROXYACID_DH_3"/>
    <property type="match status" value="1"/>
</dbReference>
<sequence>MKPSVILYKALPDDLLQRLQEHFTVHQVANLSPQTVEQNAAIFAEAEGLLGSNENVDAALLEKMPKLRATSTISVGYDNFDVDALTARKILLMHTPTVLTETVADTLMALVLSTARRVVEVAERVKAGEWTASIGPDWYGTDVHHKTLGIVGMGRIGMALAQRAHFGFNMPILYNARRHHKEAEERFNARYCDLDTLLQESDFVCLILPLTDETHHLFGAEQFAKMKSSAIFINAGRGPVVDENALIAALQKGEIHAAGLDVFEQEPLSVDSPLLSMANVVAVPHIGSATYETRYGMAACAVDNLIDALQGKVEKNCVNPHVAD</sequence>
<organism>
    <name type="scientific">Escherichia coli (strain ATCC 8739 / DSM 1576 / NBRC 3972 / NCIMB 8545 / WDCM 00012 / Crooks)</name>
    <dbReference type="NCBI Taxonomy" id="481805"/>
    <lineage>
        <taxon>Bacteria</taxon>
        <taxon>Pseudomonadati</taxon>
        <taxon>Pseudomonadota</taxon>
        <taxon>Gammaproteobacteria</taxon>
        <taxon>Enterobacterales</taxon>
        <taxon>Enterobacteriaceae</taxon>
        <taxon>Escherichia</taxon>
    </lineage>
</organism>
<keyword id="KW-0963">Cytoplasm</keyword>
<keyword id="KW-0520">NAD</keyword>
<keyword id="KW-0521">NADP</keyword>
<keyword id="KW-0560">Oxidoreductase</keyword>
<reference key="1">
    <citation type="submission" date="2008-02" db="EMBL/GenBank/DDBJ databases">
        <title>Complete sequence of Escherichia coli C str. ATCC 8739.</title>
        <authorList>
            <person name="Copeland A."/>
            <person name="Lucas S."/>
            <person name="Lapidus A."/>
            <person name="Glavina del Rio T."/>
            <person name="Dalin E."/>
            <person name="Tice H."/>
            <person name="Bruce D."/>
            <person name="Goodwin L."/>
            <person name="Pitluck S."/>
            <person name="Kiss H."/>
            <person name="Brettin T."/>
            <person name="Detter J.C."/>
            <person name="Han C."/>
            <person name="Kuske C.R."/>
            <person name="Schmutz J."/>
            <person name="Larimer F."/>
            <person name="Land M."/>
            <person name="Hauser L."/>
            <person name="Kyrpides N."/>
            <person name="Mikhailova N."/>
            <person name="Ingram L."/>
            <person name="Richardson P."/>
        </authorList>
    </citation>
    <scope>NUCLEOTIDE SEQUENCE [LARGE SCALE GENOMIC DNA]</scope>
    <source>
        <strain>ATCC 8739 / DSM 1576 / NBRC 3972 / NCIMB 8545 / WDCM 00012 / Crooks</strain>
    </source>
</reference>
<gene>
    <name evidence="1" type="primary">ghrB</name>
    <name type="ordered locus">EcolC_0163</name>
</gene>
<comment type="function">
    <text evidence="1">Catalyzes the NADPH-dependent reduction of glyoxylate and hydroxypyruvate into glycolate and glycerate, respectively.</text>
</comment>
<comment type="catalytic activity">
    <reaction evidence="1">
        <text>glycolate + NADP(+) = glyoxylate + NADPH + H(+)</text>
        <dbReference type="Rhea" id="RHEA:10992"/>
        <dbReference type="ChEBI" id="CHEBI:15378"/>
        <dbReference type="ChEBI" id="CHEBI:29805"/>
        <dbReference type="ChEBI" id="CHEBI:36655"/>
        <dbReference type="ChEBI" id="CHEBI:57783"/>
        <dbReference type="ChEBI" id="CHEBI:58349"/>
        <dbReference type="EC" id="1.1.1.79"/>
    </reaction>
</comment>
<comment type="catalytic activity">
    <reaction evidence="1">
        <text>(R)-glycerate + NAD(+) = 3-hydroxypyruvate + NADH + H(+)</text>
        <dbReference type="Rhea" id="RHEA:17905"/>
        <dbReference type="ChEBI" id="CHEBI:15378"/>
        <dbReference type="ChEBI" id="CHEBI:16659"/>
        <dbReference type="ChEBI" id="CHEBI:17180"/>
        <dbReference type="ChEBI" id="CHEBI:57540"/>
        <dbReference type="ChEBI" id="CHEBI:57945"/>
        <dbReference type="EC" id="1.1.1.81"/>
    </reaction>
</comment>
<comment type="catalytic activity">
    <reaction evidence="1">
        <text>(R)-glycerate + NADP(+) = 3-hydroxypyruvate + NADPH + H(+)</text>
        <dbReference type="Rhea" id="RHEA:18657"/>
        <dbReference type="ChEBI" id="CHEBI:15378"/>
        <dbReference type="ChEBI" id="CHEBI:16659"/>
        <dbReference type="ChEBI" id="CHEBI:17180"/>
        <dbReference type="ChEBI" id="CHEBI:57783"/>
        <dbReference type="ChEBI" id="CHEBI:58349"/>
        <dbReference type="EC" id="1.1.1.81"/>
    </reaction>
</comment>
<comment type="subunit">
    <text evidence="1">Homodimer.</text>
</comment>
<comment type="subcellular location">
    <subcellularLocation>
        <location evidence="1">Cytoplasm</location>
    </subcellularLocation>
</comment>
<comment type="similarity">
    <text evidence="1">Belongs to the D-isomer specific 2-hydroxyacid dehydrogenase family. GhrB subfamily.</text>
</comment>
<name>GHRB_ECOLC</name>
<proteinExistence type="inferred from homology"/>
<feature type="chain" id="PRO_0000348383" description="Glyoxylate/hydroxypyruvate reductase B">
    <location>
        <begin position="1"/>
        <end position="324"/>
    </location>
</feature>
<feature type="active site" evidence="1">
    <location>
        <position position="237"/>
    </location>
</feature>
<feature type="active site" evidence="1">
    <location>
        <position position="266"/>
    </location>
</feature>
<feature type="active site" description="Proton donor" evidence="1">
    <location>
        <position position="285"/>
    </location>
</feature>
<evidence type="ECO:0000255" key="1">
    <source>
        <dbReference type="HAMAP-Rule" id="MF_01667"/>
    </source>
</evidence>
<accession>B1IZP1</accession>
<protein>
    <recommendedName>
        <fullName evidence="1">Glyoxylate/hydroxypyruvate reductase B</fullName>
        <ecNumber evidence="1">1.1.1.79</ecNumber>
        <ecNumber evidence="1">1.1.1.81</ecNumber>
    </recommendedName>
</protein>